<organism>
    <name type="scientific">Wolbachia sp. subsp. Drosophila simulans (strain wRi)</name>
    <dbReference type="NCBI Taxonomy" id="66084"/>
    <lineage>
        <taxon>Bacteria</taxon>
        <taxon>Pseudomonadati</taxon>
        <taxon>Pseudomonadota</taxon>
        <taxon>Alphaproteobacteria</taxon>
        <taxon>Rickettsiales</taxon>
        <taxon>Anaplasmataceae</taxon>
        <taxon>Wolbachieae</taxon>
        <taxon>Wolbachia</taxon>
    </lineage>
</organism>
<proteinExistence type="inferred from homology"/>
<evidence type="ECO:0000255" key="1">
    <source>
        <dbReference type="HAMAP-Rule" id="MF_00197"/>
    </source>
</evidence>
<keyword id="KW-0028">Amino-acid biosynthesis</keyword>
<keyword id="KW-0963">Cytoplasm</keyword>
<keyword id="KW-0413">Isomerase</keyword>
<keyword id="KW-0457">Lysine biosynthesis</keyword>
<name>DAPF_WOLWR</name>
<dbReference type="EC" id="5.1.1.7" evidence="1"/>
<dbReference type="EMBL" id="CP001391">
    <property type="protein sequence ID" value="ACN95874.1"/>
    <property type="molecule type" value="Genomic_DNA"/>
</dbReference>
<dbReference type="SMR" id="C0R4N2"/>
<dbReference type="STRING" id="66084.WRi_011860"/>
<dbReference type="KEGG" id="wri:WRi_011860"/>
<dbReference type="HOGENOM" id="CLU_053306_1_0_5"/>
<dbReference type="UniPathway" id="UPA00034">
    <property type="reaction ID" value="UER00025"/>
</dbReference>
<dbReference type="Proteomes" id="UP000001293">
    <property type="component" value="Chromosome"/>
</dbReference>
<dbReference type="GO" id="GO:0005829">
    <property type="term" value="C:cytosol"/>
    <property type="evidence" value="ECO:0007669"/>
    <property type="project" value="TreeGrafter"/>
</dbReference>
<dbReference type="GO" id="GO:0008837">
    <property type="term" value="F:diaminopimelate epimerase activity"/>
    <property type="evidence" value="ECO:0007669"/>
    <property type="project" value="UniProtKB-UniRule"/>
</dbReference>
<dbReference type="GO" id="GO:0009089">
    <property type="term" value="P:lysine biosynthetic process via diaminopimelate"/>
    <property type="evidence" value="ECO:0007669"/>
    <property type="project" value="UniProtKB-UniRule"/>
</dbReference>
<dbReference type="Gene3D" id="3.10.310.10">
    <property type="entry name" value="Diaminopimelate Epimerase, Chain A, domain 1"/>
    <property type="match status" value="2"/>
</dbReference>
<dbReference type="HAMAP" id="MF_00197">
    <property type="entry name" value="DAP_epimerase"/>
    <property type="match status" value="1"/>
</dbReference>
<dbReference type="InterPro" id="IPR018510">
    <property type="entry name" value="DAP_epimerase_AS"/>
</dbReference>
<dbReference type="InterPro" id="IPR001653">
    <property type="entry name" value="DAP_epimerase_DapF"/>
</dbReference>
<dbReference type="NCBIfam" id="TIGR00652">
    <property type="entry name" value="DapF"/>
    <property type="match status" value="1"/>
</dbReference>
<dbReference type="PANTHER" id="PTHR31689:SF0">
    <property type="entry name" value="DIAMINOPIMELATE EPIMERASE"/>
    <property type="match status" value="1"/>
</dbReference>
<dbReference type="PANTHER" id="PTHR31689">
    <property type="entry name" value="DIAMINOPIMELATE EPIMERASE, CHLOROPLASTIC"/>
    <property type="match status" value="1"/>
</dbReference>
<dbReference type="Pfam" id="PF01678">
    <property type="entry name" value="DAP_epimerase"/>
    <property type="match status" value="2"/>
</dbReference>
<dbReference type="SUPFAM" id="SSF54506">
    <property type="entry name" value="Diaminopimelate epimerase-like"/>
    <property type="match status" value="2"/>
</dbReference>
<dbReference type="PROSITE" id="PS01326">
    <property type="entry name" value="DAP_EPIMERASE"/>
    <property type="match status" value="1"/>
</dbReference>
<feature type="chain" id="PRO_1000124434" description="Diaminopimelate epimerase">
    <location>
        <begin position="1"/>
        <end position="262"/>
    </location>
</feature>
<feature type="active site" description="Proton donor" evidence="1">
    <location>
        <position position="72"/>
    </location>
</feature>
<feature type="active site" description="Proton acceptor" evidence="1">
    <location>
        <position position="214"/>
    </location>
</feature>
<feature type="binding site" evidence="1">
    <location>
        <position position="17"/>
    </location>
    <ligand>
        <name>substrate</name>
    </ligand>
</feature>
<feature type="binding site" evidence="1">
    <location>
        <position position="45"/>
    </location>
    <ligand>
        <name>substrate</name>
    </ligand>
</feature>
<feature type="binding site" evidence="1">
    <location>
        <position position="63"/>
    </location>
    <ligand>
        <name>substrate</name>
    </ligand>
</feature>
<feature type="binding site" evidence="1">
    <location>
        <begin position="73"/>
        <end position="74"/>
    </location>
    <ligand>
        <name>substrate</name>
    </ligand>
</feature>
<feature type="binding site" evidence="1">
    <location>
        <position position="154"/>
    </location>
    <ligand>
        <name>substrate</name>
    </ligand>
</feature>
<feature type="binding site" evidence="1">
    <location>
        <position position="187"/>
    </location>
    <ligand>
        <name>substrate</name>
    </ligand>
</feature>
<feature type="binding site" evidence="1">
    <location>
        <begin position="205"/>
        <end position="206"/>
    </location>
    <ligand>
        <name>substrate</name>
    </ligand>
</feature>
<feature type="binding site" evidence="1">
    <location>
        <begin position="215"/>
        <end position="216"/>
    </location>
    <ligand>
        <name>substrate</name>
    </ligand>
</feature>
<feature type="site" description="Could be important to modulate the pK values of the two catalytic cysteine residues" evidence="1">
    <location>
        <position position="156"/>
    </location>
</feature>
<feature type="site" description="Could be important to modulate the pK values of the two catalytic cysteine residues" evidence="1">
    <location>
        <position position="205"/>
    </location>
</feature>
<comment type="function">
    <text evidence="1">Catalyzes the stereoinversion of LL-2,6-diaminopimelate (L,L-DAP) to meso-diaminopimelate (meso-DAP), a precursor of L-lysine and an essential component of the bacterial peptidoglycan.</text>
</comment>
<comment type="catalytic activity">
    <reaction evidence="1">
        <text>(2S,6S)-2,6-diaminopimelate = meso-2,6-diaminopimelate</text>
        <dbReference type="Rhea" id="RHEA:15393"/>
        <dbReference type="ChEBI" id="CHEBI:57609"/>
        <dbReference type="ChEBI" id="CHEBI:57791"/>
        <dbReference type="EC" id="5.1.1.7"/>
    </reaction>
</comment>
<comment type="pathway">
    <text evidence="1">Amino-acid biosynthesis; L-lysine biosynthesis via DAP pathway; DL-2,6-diaminopimelate from LL-2,6-diaminopimelate: step 1/1.</text>
</comment>
<comment type="subunit">
    <text evidence="1">Homodimer.</text>
</comment>
<comment type="subcellular location">
    <subcellularLocation>
        <location evidence="1">Cytoplasm</location>
    </subcellularLocation>
</comment>
<comment type="similarity">
    <text evidence="1">Belongs to the diaminopimelate epimerase family.</text>
</comment>
<reference key="1">
    <citation type="journal article" date="2009" name="Proc. Natl. Acad. Sci. U.S.A.">
        <title>The mosaic genome structure of the Wolbachia wRi strain infecting Drosophila simulans.</title>
        <authorList>
            <person name="Klasson L."/>
            <person name="Westberg J."/>
            <person name="Sapountzis P."/>
            <person name="Naeslund K."/>
            <person name="Lutnaes Y."/>
            <person name="Darby A.C."/>
            <person name="Veneti Z."/>
            <person name="Chen L."/>
            <person name="Braig H.R."/>
            <person name="Garrett R."/>
            <person name="Bourtzis K."/>
            <person name="Andersson S.G."/>
        </authorList>
    </citation>
    <scope>NUCLEOTIDE SEQUENCE [LARGE SCALE GENOMIC DNA]</scope>
    <source>
        <strain>wRi</strain>
    </source>
</reference>
<protein>
    <recommendedName>
        <fullName evidence="1">Diaminopimelate epimerase</fullName>
        <shortName evidence="1">DAP epimerase</shortName>
        <ecNumber evidence="1">5.1.1.7</ecNumber>
    </recommendedName>
    <alternativeName>
        <fullName evidence="1">PLP-independent amino acid racemase</fullName>
    </alternativeName>
</protein>
<sequence>MSGQNSENFIKMHGTGNNFVIIDSCSANDLNWNYKKIANQNGCDQVIVITNSSLADCFMHIYNADGSKAEMCGNAARCVGYLLMSEKGTEYITIELVNKRILECFKVGDKSIKVNMGKPLLKWHKIPLSTECDTLHLPIELEMLKDPVAVNIGNPHIVFFVDSVNEIPLQSLGPKLENHALFPQKINISIAQVEKSGEIALRVWERGTGITASCGSAACAALVTSTLRGYLTVQQTSVNLPGGKLLIEWANNVFMTGDIGFL</sequence>
<accession>C0R4N2</accession>
<gene>
    <name evidence="1" type="primary">dapF</name>
    <name type="ordered locus">WRi_011860</name>
</gene>